<accession>Q05926</accession>
<accession>D6VZ03</accession>
<reference key="1">
    <citation type="journal article" date="1997" name="Nature">
        <title>The nucleotide sequence of Saccharomyces cerevisiae chromosome XII.</title>
        <authorList>
            <person name="Johnston M."/>
            <person name="Hillier L.W."/>
            <person name="Riles L."/>
            <person name="Albermann K."/>
            <person name="Andre B."/>
            <person name="Ansorge W."/>
            <person name="Benes V."/>
            <person name="Brueckner M."/>
            <person name="Delius H."/>
            <person name="Dubois E."/>
            <person name="Duesterhoeft A."/>
            <person name="Entian K.-D."/>
            <person name="Floeth M."/>
            <person name="Goffeau A."/>
            <person name="Hebling U."/>
            <person name="Heumann K."/>
            <person name="Heuss-Neitzel D."/>
            <person name="Hilbert H."/>
            <person name="Hilger F."/>
            <person name="Kleine K."/>
            <person name="Koetter P."/>
            <person name="Louis E.J."/>
            <person name="Messenguy F."/>
            <person name="Mewes H.-W."/>
            <person name="Miosga T."/>
            <person name="Moestl D."/>
            <person name="Mueller-Auer S."/>
            <person name="Nentwich U."/>
            <person name="Obermaier B."/>
            <person name="Piravandi E."/>
            <person name="Pohl T.M."/>
            <person name="Portetelle D."/>
            <person name="Purnelle B."/>
            <person name="Rechmann S."/>
            <person name="Rieger M."/>
            <person name="Rinke M."/>
            <person name="Rose M."/>
            <person name="Scharfe M."/>
            <person name="Scherens B."/>
            <person name="Scholler P."/>
            <person name="Schwager C."/>
            <person name="Schwarz S."/>
            <person name="Underwood A.P."/>
            <person name="Urrestarazu L.A."/>
            <person name="Vandenbol M."/>
            <person name="Verhasselt P."/>
            <person name="Vierendeels F."/>
            <person name="Voet M."/>
            <person name="Volckaert G."/>
            <person name="Voss H."/>
            <person name="Wambutt R."/>
            <person name="Wedler E."/>
            <person name="Wedler H."/>
            <person name="Zimmermann F.K."/>
            <person name="Zollner A."/>
            <person name="Hani J."/>
            <person name="Hoheisel J.D."/>
        </authorList>
    </citation>
    <scope>NUCLEOTIDE SEQUENCE [LARGE SCALE GENOMIC DNA]</scope>
    <source>
        <strain>ATCC 204508 / S288c</strain>
    </source>
</reference>
<reference key="2">
    <citation type="journal article" date="2014" name="G3 (Bethesda)">
        <title>The reference genome sequence of Saccharomyces cerevisiae: Then and now.</title>
        <authorList>
            <person name="Engel S.R."/>
            <person name="Dietrich F.S."/>
            <person name="Fisk D.G."/>
            <person name="Binkley G."/>
            <person name="Balakrishnan R."/>
            <person name="Costanzo M.C."/>
            <person name="Dwight S.S."/>
            <person name="Hitz B.C."/>
            <person name="Karra K."/>
            <person name="Nash R.S."/>
            <person name="Weng S."/>
            <person name="Wong E.D."/>
            <person name="Lloyd P."/>
            <person name="Skrzypek M.S."/>
            <person name="Miyasato S.R."/>
            <person name="Simison M."/>
            <person name="Cherry J.M."/>
        </authorList>
    </citation>
    <scope>GENOME REANNOTATION</scope>
    <source>
        <strain>ATCC 204508 / S288c</strain>
    </source>
</reference>
<reference key="3">
    <citation type="journal article" date="2007" name="Genome Res.">
        <title>Approaching a complete repository of sequence-verified protein-encoding clones for Saccharomyces cerevisiae.</title>
        <authorList>
            <person name="Hu Y."/>
            <person name="Rolfs A."/>
            <person name="Bhullar B."/>
            <person name="Murthy T.V.S."/>
            <person name="Zhu C."/>
            <person name="Berger M.F."/>
            <person name="Camargo A.A."/>
            <person name="Kelley F."/>
            <person name="McCarron S."/>
            <person name="Jepson D."/>
            <person name="Richardson A."/>
            <person name="Raphael J."/>
            <person name="Moreira D."/>
            <person name="Taycher E."/>
            <person name="Zuo D."/>
            <person name="Mohr S."/>
            <person name="Kane M.F."/>
            <person name="Williamson J."/>
            <person name="Simpson A.J.G."/>
            <person name="Bulyk M.L."/>
            <person name="Harlow E."/>
            <person name="Marsischky G."/>
            <person name="Kolodner R.D."/>
            <person name="LaBaer J."/>
        </authorList>
    </citation>
    <scope>NUCLEOTIDE SEQUENCE [GENOMIC DNA]</scope>
    <source>
        <strain>ATCC 204508 / S288c</strain>
    </source>
</reference>
<reference key="4">
    <citation type="journal article" date="2003" name="Nature">
        <title>Global analysis of protein localization in budding yeast.</title>
        <authorList>
            <person name="Huh W.-K."/>
            <person name="Falvo J.V."/>
            <person name="Gerke L.C."/>
            <person name="Carroll A.S."/>
            <person name="Howson R.W."/>
            <person name="Weissman J.S."/>
            <person name="O'Shea E.K."/>
        </authorList>
    </citation>
    <scope>SUBCELLULAR LOCATION [LARGE SCALE ANALYSIS]</scope>
</reference>
<reference key="5">
    <citation type="journal article" date="2003" name="Nature">
        <title>Global analysis of protein expression in yeast.</title>
        <authorList>
            <person name="Ghaemmaghami S."/>
            <person name="Huh W.-K."/>
            <person name="Bower K."/>
            <person name="Howson R.W."/>
            <person name="Belle A."/>
            <person name="Dephoure N."/>
            <person name="O'Shea E.K."/>
            <person name="Weissman J.S."/>
        </authorList>
    </citation>
    <scope>LEVEL OF PROTEIN EXPRESSION [LARGE SCALE ANALYSIS]</scope>
</reference>
<reference key="6">
    <citation type="journal article" date="2004" name="Genome Biol.">
        <title>Integrating phenotypic and expression profiles to map arsenic-response networks.</title>
        <authorList>
            <person name="Haugen A.C."/>
            <person name="Kelley R."/>
            <person name="Collins J.B."/>
            <person name="Tucker C.J."/>
            <person name="Deng C."/>
            <person name="Afshari C.A."/>
            <person name="Brown J.M."/>
            <person name="Ideker T."/>
            <person name="Van Houten B."/>
        </authorList>
    </citation>
    <scope>INDUCTION</scope>
</reference>
<reference key="7">
    <citation type="journal article" date="2008" name="Mol. Biol. Cell">
        <title>A novel group of glutaredoxins in the cis-Golgi critical for oxidative stress resistance.</title>
        <authorList>
            <person name="Mesecke N."/>
            <person name="Spang A."/>
            <person name="Deponte M."/>
            <person name="Herrmann J.M."/>
        </authorList>
    </citation>
    <scope>FUNCTION</scope>
</reference>
<reference key="8">
    <citation type="journal article" date="2009" name="Biochemistry">
        <title>Biochemical characterization of dithiol glutaredoxin 8 from Saccharomyces cerevisiae: the catalytic redox mechanism redux.</title>
        <authorList>
            <person name="Eckers E."/>
            <person name="Bien M."/>
            <person name="Stroobant V."/>
            <person name="Herrmann J.M."/>
            <person name="Deponte M."/>
        </authorList>
    </citation>
    <scope>FUNCTION</scope>
    <scope>SUBUNIT</scope>
    <scope>MUTAGENESIS OF CYS-25 AND CYS-28</scope>
</reference>
<dbReference type="EMBL" id="U19103">
    <property type="protein sequence ID" value="AAB67570.1"/>
    <property type="molecule type" value="Genomic_DNA"/>
</dbReference>
<dbReference type="EMBL" id="AY558221">
    <property type="protein sequence ID" value="AAS56547.1"/>
    <property type="molecule type" value="Genomic_DNA"/>
</dbReference>
<dbReference type="EMBL" id="BK006945">
    <property type="protein sequence ID" value="DAA09669.1"/>
    <property type="molecule type" value="Genomic_DNA"/>
</dbReference>
<dbReference type="PIR" id="S51382">
    <property type="entry name" value="S51382"/>
</dbReference>
<dbReference type="RefSeq" id="NP_013468.3">
    <property type="nucleotide sequence ID" value="NM_001182253.3"/>
</dbReference>
<dbReference type="PDB" id="2M80">
    <property type="method" value="NMR"/>
    <property type="chains" value="A=1-109"/>
</dbReference>
<dbReference type="PDBsum" id="2M80"/>
<dbReference type="BMRB" id="Q05926"/>
<dbReference type="SMR" id="Q05926"/>
<dbReference type="BioGRID" id="31626">
    <property type="interactions" value="66"/>
</dbReference>
<dbReference type="FunCoup" id="Q05926">
    <property type="interactions" value="59"/>
</dbReference>
<dbReference type="IntAct" id="Q05926">
    <property type="interactions" value="1"/>
</dbReference>
<dbReference type="STRING" id="4932.YLR364W"/>
<dbReference type="PaxDb" id="4932-YLR364W"/>
<dbReference type="PeptideAtlas" id="Q05926"/>
<dbReference type="EnsemblFungi" id="YLR364W_mRNA">
    <property type="protein sequence ID" value="YLR364W"/>
    <property type="gene ID" value="YLR364W"/>
</dbReference>
<dbReference type="GeneID" id="851079"/>
<dbReference type="KEGG" id="sce:YLR364W"/>
<dbReference type="AGR" id="SGD:S000004356"/>
<dbReference type="SGD" id="S000004356">
    <property type="gene designation" value="GRX8"/>
</dbReference>
<dbReference type="VEuPathDB" id="FungiDB:YLR364W"/>
<dbReference type="eggNOG" id="KOG1752">
    <property type="taxonomic scope" value="Eukaryota"/>
</dbReference>
<dbReference type="HOGENOM" id="CLU_026126_7_2_1"/>
<dbReference type="InParanoid" id="Q05926"/>
<dbReference type="OMA" id="RKWVPTI"/>
<dbReference type="OrthoDB" id="418495at2759"/>
<dbReference type="BioCyc" id="YEAST:G3O-32435-MONOMER"/>
<dbReference type="BioGRID-ORCS" id="851079">
    <property type="hits" value="0 hits in 10 CRISPR screens"/>
</dbReference>
<dbReference type="ChiTaRS" id="GRX8">
    <property type="organism name" value="yeast"/>
</dbReference>
<dbReference type="EvolutionaryTrace" id="Q05926"/>
<dbReference type="PRO" id="PR:Q05926"/>
<dbReference type="Proteomes" id="UP000002311">
    <property type="component" value="Chromosome XII"/>
</dbReference>
<dbReference type="RNAct" id="Q05926">
    <property type="molecule type" value="protein"/>
</dbReference>
<dbReference type="GO" id="GO:0005737">
    <property type="term" value="C:cytoplasm"/>
    <property type="evidence" value="ECO:0007005"/>
    <property type="project" value="SGD"/>
</dbReference>
<dbReference type="GO" id="GO:0004362">
    <property type="term" value="F:glutathione-disulfide reductase (NADPH) activity"/>
    <property type="evidence" value="ECO:0000314"/>
    <property type="project" value="SGD"/>
</dbReference>
<dbReference type="FunFam" id="3.40.30.10:FF:000438">
    <property type="entry name" value="Grx8p"/>
    <property type="match status" value="1"/>
</dbReference>
<dbReference type="Gene3D" id="3.40.30.10">
    <property type="entry name" value="Glutaredoxin"/>
    <property type="match status" value="1"/>
</dbReference>
<dbReference type="InterPro" id="IPR002109">
    <property type="entry name" value="Glutaredoxin"/>
</dbReference>
<dbReference type="InterPro" id="IPR036249">
    <property type="entry name" value="Thioredoxin-like_sf"/>
</dbReference>
<dbReference type="Pfam" id="PF00462">
    <property type="entry name" value="Glutaredoxin"/>
    <property type="match status" value="1"/>
</dbReference>
<dbReference type="SUPFAM" id="SSF52833">
    <property type="entry name" value="Thioredoxin-like"/>
    <property type="match status" value="1"/>
</dbReference>
<dbReference type="PROSITE" id="PS51354">
    <property type="entry name" value="GLUTAREDOXIN_2"/>
    <property type="match status" value="1"/>
</dbReference>
<gene>
    <name type="primary">GRX8</name>
    <name type="ordered locus">YLR364W</name>
</gene>
<sequence length="109" mass="12519">MSAFVTKAEEMIKSHPYFQLSASWCPDCVYANSIWNKLNVQDKVFVFDIGSLPRNEQEKWRIAFQKVVGSRNLPTIVVNGKFWGTESQLHRFEAKGTLEEELTKIGLLP</sequence>
<organism>
    <name type="scientific">Saccharomyces cerevisiae (strain ATCC 204508 / S288c)</name>
    <name type="common">Baker's yeast</name>
    <dbReference type="NCBI Taxonomy" id="559292"/>
    <lineage>
        <taxon>Eukaryota</taxon>
        <taxon>Fungi</taxon>
        <taxon>Dikarya</taxon>
        <taxon>Ascomycota</taxon>
        <taxon>Saccharomycotina</taxon>
        <taxon>Saccharomycetes</taxon>
        <taxon>Saccharomycetales</taxon>
        <taxon>Saccharomycetaceae</taxon>
        <taxon>Saccharomyces</taxon>
    </lineage>
</organism>
<proteinExistence type="evidence at protein level"/>
<name>GLRX8_YEAST</name>
<comment type="function">
    <text evidence="5 6">Glutathione-dependent oxidoreductase with lower activity compared to the other members of the glutaredoxin family. The disulfide bond functions as an electron carrier in the glutathione-dependent synthesis of deoxyribonucleotides by the enzyme ribonucleotide reductase.</text>
</comment>
<comment type="subunit">
    <text evidence="6">Monomer.</text>
</comment>
<comment type="subcellular location">
    <subcellularLocation>
        <location evidence="2">Cytoplasm</location>
    </subcellularLocation>
</comment>
<comment type="induction">
    <text evidence="4">Strongly induced by the exposure to arsenic which causes glutathione depletion.</text>
</comment>
<comment type="miscellaneous">
    <text evidence="3">Present with 573 molecules/cell in log phase SD medium.</text>
</comment>
<comment type="similarity">
    <text evidence="7">Belongs to the glutaredoxin family.</text>
</comment>
<protein>
    <recommendedName>
        <fullName>Glutaredoxin-8</fullName>
    </recommendedName>
    <alternativeName>
        <fullName>Glutathione-dependent oxidoreductase 8</fullName>
    </alternativeName>
</protein>
<evidence type="ECO:0000255" key="1">
    <source>
        <dbReference type="PROSITE-ProRule" id="PRU00686"/>
    </source>
</evidence>
<evidence type="ECO:0000269" key="2">
    <source>
    </source>
</evidence>
<evidence type="ECO:0000269" key="3">
    <source>
    </source>
</evidence>
<evidence type="ECO:0000269" key="4">
    <source>
    </source>
</evidence>
<evidence type="ECO:0000269" key="5">
    <source>
    </source>
</evidence>
<evidence type="ECO:0000269" key="6">
    <source>
    </source>
</evidence>
<evidence type="ECO:0000305" key="7"/>
<evidence type="ECO:0007829" key="8">
    <source>
        <dbReference type="PDB" id="2M80"/>
    </source>
</evidence>
<feature type="chain" id="PRO_0000268192" description="Glutaredoxin-8">
    <location>
        <begin position="1"/>
        <end position="109"/>
    </location>
</feature>
<feature type="domain" description="Glutaredoxin" evidence="1">
    <location>
        <begin position="5"/>
        <end position="109"/>
    </location>
</feature>
<feature type="disulfide bond" description="Redox-active" evidence="7">
    <location>
        <begin position="25"/>
        <end position="28"/>
    </location>
</feature>
<feature type="mutagenesis site" description="Impairs activity." evidence="6">
    <original>C</original>
    <variation>S</variation>
    <location>
        <position position="25"/>
    </location>
</feature>
<feature type="mutagenesis site" description="Impairs activity." evidence="6">
    <original>C</original>
    <variation>S</variation>
    <location>
        <position position="28"/>
    </location>
</feature>
<feature type="helix" evidence="8">
    <location>
        <begin position="5"/>
        <end position="14"/>
    </location>
</feature>
<feature type="strand" evidence="8">
    <location>
        <begin position="17"/>
        <end position="21"/>
    </location>
</feature>
<feature type="helix" evidence="8">
    <location>
        <begin position="28"/>
        <end position="38"/>
    </location>
</feature>
<feature type="turn" evidence="8">
    <location>
        <begin position="41"/>
        <end position="43"/>
    </location>
</feature>
<feature type="strand" evidence="8">
    <location>
        <begin position="44"/>
        <end position="48"/>
    </location>
</feature>
<feature type="helix" evidence="8">
    <location>
        <begin position="54"/>
        <end position="67"/>
    </location>
</feature>
<feature type="strand" evidence="8">
    <location>
        <begin position="72"/>
        <end position="78"/>
    </location>
</feature>
<feature type="strand" evidence="8">
    <location>
        <begin position="81"/>
        <end position="84"/>
    </location>
</feature>
<feature type="helix" evidence="8">
    <location>
        <begin position="86"/>
        <end position="95"/>
    </location>
</feature>
<feature type="helix" evidence="8">
    <location>
        <begin position="98"/>
        <end position="104"/>
    </location>
</feature>
<keyword id="KW-0002">3D-structure</keyword>
<keyword id="KW-0963">Cytoplasm</keyword>
<keyword id="KW-1015">Disulfide bond</keyword>
<keyword id="KW-0249">Electron transport</keyword>
<keyword id="KW-0676">Redox-active center</keyword>
<keyword id="KW-1185">Reference proteome</keyword>
<keyword id="KW-0813">Transport</keyword>